<gene>
    <name type="primary">Ggamma1</name>
    <name type="synonym">G1</name>
    <name type="ORF">CG8261</name>
</gene>
<sequence>MDVMSSSLQQQRVVVEQLRREAAIDRQTISESCAKMMKYITEHEQEDYLLTGFTSQKVNPFREKSSCTVL</sequence>
<name>GBG1_DROME</name>
<reference key="1">
    <citation type="journal article" date="1992" name="J. Biol. Chem.">
        <title>The Drosophila G protein gamma subunit gene (D-G gamma 1) produces three developmentally regulated transcripts and is predominantly expressed in the central nervous system.</title>
        <authorList>
            <person name="Ray K."/>
            <person name="Ganguly R."/>
        </authorList>
    </citation>
    <scope>NUCLEOTIDE SEQUENCE [MRNA]</scope>
    <scope>FUNCTION</scope>
    <scope>TISSUE SPECIFICITY</scope>
</reference>
<reference key="2">
    <citation type="journal article" date="2000" name="Science">
        <title>The genome sequence of Drosophila melanogaster.</title>
        <authorList>
            <person name="Adams M.D."/>
            <person name="Celniker S.E."/>
            <person name="Holt R.A."/>
            <person name="Evans C.A."/>
            <person name="Gocayne J.D."/>
            <person name="Amanatides P.G."/>
            <person name="Scherer S.E."/>
            <person name="Li P.W."/>
            <person name="Hoskins R.A."/>
            <person name="Galle R.F."/>
            <person name="George R.A."/>
            <person name="Lewis S.E."/>
            <person name="Richards S."/>
            <person name="Ashburner M."/>
            <person name="Henderson S.N."/>
            <person name="Sutton G.G."/>
            <person name="Wortman J.R."/>
            <person name="Yandell M.D."/>
            <person name="Zhang Q."/>
            <person name="Chen L.X."/>
            <person name="Brandon R.C."/>
            <person name="Rogers Y.-H.C."/>
            <person name="Blazej R.G."/>
            <person name="Champe M."/>
            <person name="Pfeiffer B.D."/>
            <person name="Wan K.H."/>
            <person name="Doyle C."/>
            <person name="Baxter E.G."/>
            <person name="Helt G."/>
            <person name="Nelson C.R."/>
            <person name="Miklos G.L.G."/>
            <person name="Abril J.F."/>
            <person name="Agbayani A."/>
            <person name="An H.-J."/>
            <person name="Andrews-Pfannkoch C."/>
            <person name="Baldwin D."/>
            <person name="Ballew R.M."/>
            <person name="Basu A."/>
            <person name="Baxendale J."/>
            <person name="Bayraktaroglu L."/>
            <person name="Beasley E.M."/>
            <person name="Beeson K.Y."/>
            <person name="Benos P.V."/>
            <person name="Berman B.P."/>
            <person name="Bhandari D."/>
            <person name="Bolshakov S."/>
            <person name="Borkova D."/>
            <person name="Botchan M.R."/>
            <person name="Bouck J."/>
            <person name="Brokstein P."/>
            <person name="Brottier P."/>
            <person name="Burtis K.C."/>
            <person name="Busam D.A."/>
            <person name="Butler H."/>
            <person name="Cadieu E."/>
            <person name="Center A."/>
            <person name="Chandra I."/>
            <person name="Cherry J.M."/>
            <person name="Cawley S."/>
            <person name="Dahlke C."/>
            <person name="Davenport L.B."/>
            <person name="Davies P."/>
            <person name="de Pablos B."/>
            <person name="Delcher A."/>
            <person name="Deng Z."/>
            <person name="Mays A.D."/>
            <person name="Dew I."/>
            <person name="Dietz S.M."/>
            <person name="Dodson K."/>
            <person name="Doup L.E."/>
            <person name="Downes M."/>
            <person name="Dugan-Rocha S."/>
            <person name="Dunkov B.C."/>
            <person name="Dunn P."/>
            <person name="Durbin K.J."/>
            <person name="Evangelista C.C."/>
            <person name="Ferraz C."/>
            <person name="Ferriera S."/>
            <person name="Fleischmann W."/>
            <person name="Fosler C."/>
            <person name="Gabrielian A.E."/>
            <person name="Garg N.S."/>
            <person name="Gelbart W.M."/>
            <person name="Glasser K."/>
            <person name="Glodek A."/>
            <person name="Gong F."/>
            <person name="Gorrell J.H."/>
            <person name="Gu Z."/>
            <person name="Guan P."/>
            <person name="Harris M."/>
            <person name="Harris N.L."/>
            <person name="Harvey D.A."/>
            <person name="Heiman T.J."/>
            <person name="Hernandez J.R."/>
            <person name="Houck J."/>
            <person name="Hostin D."/>
            <person name="Houston K.A."/>
            <person name="Howland T.J."/>
            <person name="Wei M.-H."/>
            <person name="Ibegwam C."/>
            <person name="Jalali M."/>
            <person name="Kalush F."/>
            <person name="Karpen G.H."/>
            <person name="Ke Z."/>
            <person name="Kennison J.A."/>
            <person name="Ketchum K.A."/>
            <person name="Kimmel B.E."/>
            <person name="Kodira C.D."/>
            <person name="Kraft C.L."/>
            <person name="Kravitz S."/>
            <person name="Kulp D."/>
            <person name="Lai Z."/>
            <person name="Lasko P."/>
            <person name="Lei Y."/>
            <person name="Levitsky A.A."/>
            <person name="Li J.H."/>
            <person name="Li Z."/>
            <person name="Liang Y."/>
            <person name="Lin X."/>
            <person name="Liu X."/>
            <person name="Mattei B."/>
            <person name="McIntosh T.C."/>
            <person name="McLeod M.P."/>
            <person name="McPherson D."/>
            <person name="Merkulov G."/>
            <person name="Milshina N.V."/>
            <person name="Mobarry C."/>
            <person name="Morris J."/>
            <person name="Moshrefi A."/>
            <person name="Mount S.M."/>
            <person name="Moy M."/>
            <person name="Murphy B."/>
            <person name="Murphy L."/>
            <person name="Muzny D.M."/>
            <person name="Nelson D.L."/>
            <person name="Nelson D.R."/>
            <person name="Nelson K.A."/>
            <person name="Nixon K."/>
            <person name="Nusskern D.R."/>
            <person name="Pacleb J.M."/>
            <person name="Palazzolo M."/>
            <person name="Pittman G.S."/>
            <person name="Pan S."/>
            <person name="Pollard J."/>
            <person name="Puri V."/>
            <person name="Reese M.G."/>
            <person name="Reinert K."/>
            <person name="Remington K."/>
            <person name="Saunders R.D.C."/>
            <person name="Scheeler F."/>
            <person name="Shen H."/>
            <person name="Shue B.C."/>
            <person name="Siden-Kiamos I."/>
            <person name="Simpson M."/>
            <person name="Skupski M.P."/>
            <person name="Smith T.J."/>
            <person name="Spier E."/>
            <person name="Spradling A.C."/>
            <person name="Stapleton M."/>
            <person name="Strong R."/>
            <person name="Sun E."/>
            <person name="Svirskas R."/>
            <person name="Tector C."/>
            <person name="Turner R."/>
            <person name="Venter E."/>
            <person name="Wang A.H."/>
            <person name="Wang X."/>
            <person name="Wang Z.-Y."/>
            <person name="Wassarman D.A."/>
            <person name="Weinstock G.M."/>
            <person name="Weissenbach J."/>
            <person name="Williams S.M."/>
            <person name="Woodage T."/>
            <person name="Worley K.C."/>
            <person name="Wu D."/>
            <person name="Yang S."/>
            <person name="Yao Q.A."/>
            <person name="Ye J."/>
            <person name="Yeh R.-F."/>
            <person name="Zaveri J.S."/>
            <person name="Zhan M."/>
            <person name="Zhang G."/>
            <person name="Zhao Q."/>
            <person name="Zheng L."/>
            <person name="Zheng X.H."/>
            <person name="Zhong F.N."/>
            <person name="Zhong W."/>
            <person name="Zhou X."/>
            <person name="Zhu S.C."/>
            <person name="Zhu X."/>
            <person name="Smith H.O."/>
            <person name="Gibbs R.A."/>
            <person name="Myers E.W."/>
            <person name="Rubin G.M."/>
            <person name="Venter J.C."/>
        </authorList>
    </citation>
    <scope>NUCLEOTIDE SEQUENCE [LARGE SCALE GENOMIC DNA]</scope>
    <source>
        <strain>Berkeley</strain>
    </source>
</reference>
<reference key="3">
    <citation type="journal article" date="2002" name="Genome Biol.">
        <title>Annotation of the Drosophila melanogaster euchromatic genome: a systematic review.</title>
        <authorList>
            <person name="Misra S."/>
            <person name="Crosby M.A."/>
            <person name="Mungall C.J."/>
            <person name="Matthews B.B."/>
            <person name="Campbell K.S."/>
            <person name="Hradecky P."/>
            <person name="Huang Y."/>
            <person name="Kaminker J.S."/>
            <person name="Millburn G.H."/>
            <person name="Prochnik S.E."/>
            <person name="Smith C.D."/>
            <person name="Tupy J.L."/>
            <person name="Whitfield E.J."/>
            <person name="Bayraktaroglu L."/>
            <person name="Berman B.P."/>
            <person name="Bettencourt B.R."/>
            <person name="Celniker S.E."/>
            <person name="de Grey A.D.N.J."/>
            <person name="Drysdale R.A."/>
            <person name="Harris N.L."/>
            <person name="Richter J."/>
            <person name="Russo S."/>
            <person name="Schroeder A.J."/>
            <person name="Shu S.Q."/>
            <person name="Stapleton M."/>
            <person name="Yamada C."/>
            <person name="Ashburner M."/>
            <person name="Gelbart W.M."/>
            <person name="Rubin G.M."/>
            <person name="Lewis S.E."/>
        </authorList>
    </citation>
    <scope>GENOME REANNOTATION</scope>
    <source>
        <strain>Berkeley</strain>
    </source>
</reference>
<reference key="4">
    <citation type="journal article" date="2002" name="Genome Biol.">
        <title>A Drosophila full-length cDNA resource.</title>
        <authorList>
            <person name="Stapleton M."/>
            <person name="Carlson J.W."/>
            <person name="Brokstein P."/>
            <person name="Yu C."/>
            <person name="Champe M."/>
            <person name="George R.A."/>
            <person name="Guarin H."/>
            <person name="Kronmiller B."/>
            <person name="Pacleb J.M."/>
            <person name="Park S."/>
            <person name="Wan K.H."/>
            <person name="Rubin G.M."/>
            <person name="Celniker S.E."/>
        </authorList>
    </citation>
    <scope>NUCLEOTIDE SEQUENCE [LARGE SCALE MRNA]</scope>
    <source>
        <strain>Berkeley</strain>
        <tissue>Embryo</tissue>
    </source>
</reference>
<protein>
    <recommendedName>
        <fullName>Guanine nucleotide-binding protein subunit gamma-1</fullName>
    </recommendedName>
</protein>
<feature type="chain" id="PRO_0000012677" description="Guanine nucleotide-binding protein subunit gamma-1">
    <location>
        <begin position="1"/>
        <end position="67"/>
    </location>
</feature>
<feature type="propeptide" id="PRO_0000012678" description="Removed in mature form" evidence="1">
    <location>
        <begin position="68"/>
        <end position="70"/>
    </location>
</feature>
<feature type="modified residue" description="Cysteine methyl ester" evidence="1">
    <location>
        <position position="67"/>
    </location>
</feature>
<feature type="lipid moiety-binding region" description="S-geranylgeranyl cysteine" evidence="1">
    <location>
        <position position="67"/>
    </location>
</feature>
<comment type="function">
    <text evidence="2">Guanine nucleotide-binding proteins (G proteins) are involved as a modulator or transducer in various transmembrane signaling systems. The beta and gamma chains are required for the GTPase activity, for replacement of GDP by GTP, and for G protein-effector interaction.</text>
</comment>
<comment type="subunit">
    <text>G proteins are composed of 3 units, alpha, beta and gamma.</text>
</comment>
<comment type="subcellular location">
    <subcellularLocation>
        <location evidence="3">Cell membrane</location>
        <topology evidence="3">Lipid-anchor</topology>
        <orientation evidence="3">Cytoplasmic side</orientation>
    </subcellularLocation>
</comment>
<comment type="tissue specificity">
    <text evidence="2">Predominantly expressed in the central nervous system.</text>
</comment>
<comment type="similarity">
    <text evidence="3">Belongs to the G protein gamma family.</text>
</comment>
<dbReference type="EMBL" id="M85042">
    <property type="protein sequence ID" value="AAA28570.1"/>
    <property type="molecule type" value="mRNA"/>
</dbReference>
<dbReference type="EMBL" id="AE013599">
    <property type="protein sequence ID" value="AAF59030.1"/>
    <property type="molecule type" value="Genomic_DNA"/>
</dbReference>
<dbReference type="EMBL" id="AE013599">
    <property type="protein sequence ID" value="AAM71087.1"/>
    <property type="molecule type" value="Genomic_DNA"/>
</dbReference>
<dbReference type="EMBL" id="AY118489">
    <property type="protein sequence ID" value="AAM49858.1"/>
    <property type="molecule type" value="mRNA"/>
</dbReference>
<dbReference type="PIR" id="A42155">
    <property type="entry name" value="A42155"/>
</dbReference>
<dbReference type="RefSeq" id="NP_523662.1">
    <property type="nucleotide sequence ID" value="NM_078938.3"/>
</dbReference>
<dbReference type="RefSeq" id="NP_724718.1">
    <property type="nucleotide sequence ID" value="NM_165631.2"/>
</dbReference>
<dbReference type="RefSeq" id="NP_724719.1">
    <property type="nucleotide sequence ID" value="NM_165632.2"/>
</dbReference>
<dbReference type="SMR" id="P38040"/>
<dbReference type="BioGRID" id="61721">
    <property type="interactions" value="4"/>
</dbReference>
<dbReference type="FunCoup" id="P38040">
    <property type="interactions" value="147"/>
</dbReference>
<dbReference type="IntAct" id="P38040">
    <property type="interactions" value="5"/>
</dbReference>
<dbReference type="STRING" id="7227.FBpp0087726"/>
<dbReference type="PaxDb" id="7227-FBpp0087728"/>
<dbReference type="DNASU" id="35881"/>
<dbReference type="EnsemblMetazoa" id="FBtr0088645">
    <property type="protein sequence ID" value="FBpp0087726"/>
    <property type="gene ID" value="FBgn0004921"/>
</dbReference>
<dbReference type="EnsemblMetazoa" id="FBtr0088646">
    <property type="protein sequence ID" value="FBpp0087727"/>
    <property type="gene ID" value="FBgn0004921"/>
</dbReference>
<dbReference type="EnsemblMetazoa" id="FBtr0088647">
    <property type="protein sequence ID" value="FBpp0087728"/>
    <property type="gene ID" value="FBgn0004921"/>
</dbReference>
<dbReference type="GeneID" id="35881"/>
<dbReference type="KEGG" id="dme:Dmel_CG8261"/>
<dbReference type="AGR" id="FB:FBgn0004921"/>
<dbReference type="CTD" id="35881"/>
<dbReference type="FlyBase" id="FBgn0004921">
    <property type="gene designation" value="Ggamma1"/>
</dbReference>
<dbReference type="VEuPathDB" id="VectorBase:FBgn0004921"/>
<dbReference type="eggNOG" id="KOG4280">
    <property type="taxonomic scope" value="Eukaryota"/>
</dbReference>
<dbReference type="GeneTree" id="ENSGT01100000263525"/>
<dbReference type="HOGENOM" id="CLU_168377_3_2_1"/>
<dbReference type="InParanoid" id="P38040"/>
<dbReference type="OMA" id="QEKKSCA"/>
<dbReference type="OrthoDB" id="6264244at2759"/>
<dbReference type="PhylomeDB" id="P38040"/>
<dbReference type="Reactome" id="R-DME-1296041">
    <property type="pathway name" value="Activation of G protein gated Potassium channels"/>
</dbReference>
<dbReference type="Reactome" id="R-DME-202040">
    <property type="pathway name" value="G-protein activation"/>
</dbReference>
<dbReference type="Reactome" id="R-DME-2514859">
    <property type="pathway name" value="Inactivation, recovery and regulation of the phototransduction cascade"/>
</dbReference>
<dbReference type="Reactome" id="R-DME-392170">
    <property type="pathway name" value="ADP signalling through P2Y purinoceptor 12"/>
</dbReference>
<dbReference type="Reactome" id="R-DME-392451">
    <property type="pathway name" value="G beta:gamma signalling through PI3Kgamma"/>
</dbReference>
<dbReference type="Reactome" id="R-DME-392851">
    <property type="pathway name" value="Prostacyclin signalling through prostacyclin receptor"/>
</dbReference>
<dbReference type="Reactome" id="R-DME-400042">
    <property type="pathway name" value="Adrenaline,noradrenaline inhibits insulin secretion"/>
</dbReference>
<dbReference type="Reactome" id="R-DME-4086398">
    <property type="pathway name" value="Ca2+ pathway"/>
</dbReference>
<dbReference type="Reactome" id="R-DME-416476">
    <property type="pathway name" value="G alpha (q) signalling events"/>
</dbReference>
<dbReference type="Reactome" id="R-DME-416482">
    <property type="pathway name" value="G alpha (12/13) signalling events"/>
</dbReference>
<dbReference type="Reactome" id="R-DME-418217">
    <property type="pathway name" value="G beta:gamma signalling through PLC beta"/>
</dbReference>
<dbReference type="Reactome" id="R-DME-418555">
    <property type="pathway name" value="G alpha (s) signalling events"/>
</dbReference>
<dbReference type="Reactome" id="R-DME-418594">
    <property type="pathway name" value="G alpha (i) signalling events"/>
</dbReference>
<dbReference type="Reactome" id="R-DME-418597">
    <property type="pathway name" value="G alpha (z) signalling events"/>
</dbReference>
<dbReference type="Reactome" id="R-DME-428930">
    <property type="pathway name" value="Thromboxane signalling through TP receptor"/>
</dbReference>
<dbReference type="Reactome" id="R-DME-500657">
    <property type="pathway name" value="Presynaptic function of Kainate receptors"/>
</dbReference>
<dbReference type="Reactome" id="R-DME-6814122">
    <property type="pathway name" value="Cooperation of PDCL (PhLP1) and TRiC/CCT in G-protein beta folding"/>
</dbReference>
<dbReference type="Reactome" id="R-DME-8964315">
    <property type="pathway name" value="G beta:gamma signalling through BTK"/>
</dbReference>
<dbReference type="Reactome" id="R-DME-8964616">
    <property type="pathway name" value="G beta:gamma signalling through CDC42"/>
</dbReference>
<dbReference type="Reactome" id="R-DME-9009391">
    <property type="pathway name" value="Extra-nuclear estrogen signaling"/>
</dbReference>
<dbReference type="Reactome" id="R-DME-997272">
    <property type="pathway name" value="Inhibition of voltage gated Ca2+ channels via Gbeta/gamma subunits"/>
</dbReference>
<dbReference type="BioGRID-ORCS" id="35881">
    <property type="hits" value="0 hits in 3 CRISPR screens"/>
</dbReference>
<dbReference type="ChiTaRS" id="Ggamma1">
    <property type="organism name" value="fly"/>
</dbReference>
<dbReference type="GenomeRNAi" id="35881"/>
<dbReference type="PRO" id="PR:P38040"/>
<dbReference type="Proteomes" id="UP000000803">
    <property type="component" value="Chromosome 2R"/>
</dbReference>
<dbReference type="Bgee" id="FBgn0004921">
    <property type="expression patterns" value="Expressed in proximal medullary amacrine neuron Pm4 in brain and 288 other cell types or tissues"/>
</dbReference>
<dbReference type="GO" id="GO:0005834">
    <property type="term" value="C:heterotrimeric G-protein complex"/>
    <property type="evidence" value="ECO:0000314"/>
    <property type="project" value="FlyBase"/>
</dbReference>
<dbReference type="GO" id="GO:0031681">
    <property type="term" value="F:G-protein beta-subunit binding"/>
    <property type="evidence" value="ECO:0007669"/>
    <property type="project" value="InterPro"/>
</dbReference>
<dbReference type="GO" id="GO:0045176">
    <property type="term" value="P:apical protein localization"/>
    <property type="evidence" value="ECO:0000304"/>
    <property type="project" value="FlyBase"/>
</dbReference>
<dbReference type="GO" id="GO:0055059">
    <property type="term" value="P:asymmetric neuroblast division"/>
    <property type="evidence" value="ECO:0000315"/>
    <property type="project" value="FlyBase"/>
</dbReference>
<dbReference type="GO" id="GO:0061343">
    <property type="term" value="P:cell adhesion involved in heart morphogenesis"/>
    <property type="evidence" value="ECO:0000315"/>
    <property type="project" value="FlyBase"/>
</dbReference>
<dbReference type="GO" id="GO:0060027">
    <property type="term" value="P:convergent extension involved in gastrulation"/>
    <property type="evidence" value="ECO:0000315"/>
    <property type="project" value="FlyBase"/>
</dbReference>
<dbReference type="GO" id="GO:0007391">
    <property type="term" value="P:dorsal closure"/>
    <property type="evidence" value="ECO:0000315"/>
    <property type="project" value="FlyBase"/>
</dbReference>
<dbReference type="GO" id="GO:0035050">
    <property type="term" value="P:embryonic heart tube development"/>
    <property type="evidence" value="ECO:0000315"/>
    <property type="project" value="FlyBase"/>
</dbReference>
<dbReference type="GO" id="GO:0003380">
    <property type="term" value="P:establishment or maintenance of cytoskeleton polarity involved in gastrulation"/>
    <property type="evidence" value="ECO:0000315"/>
    <property type="project" value="FlyBase"/>
</dbReference>
<dbReference type="GO" id="GO:0007186">
    <property type="term" value="P:G protein-coupled receptor signaling pathway"/>
    <property type="evidence" value="ECO:0000314"/>
    <property type="project" value="FlyBase"/>
</dbReference>
<dbReference type="GO" id="GO:0003015">
    <property type="term" value="P:heart process"/>
    <property type="evidence" value="ECO:0000315"/>
    <property type="project" value="FlyBase"/>
</dbReference>
<dbReference type="GO" id="GO:0048383">
    <property type="term" value="P:mesectoderm development"/>
    <property type="evidence" value="ECO:0000315"/>
    <property type="project" value="FlyBase"/>
</dbReference>
<dbReference type="GO" id="GO:0007637">
    <property type="term" value="P:proboscis extension reflex"/>
    <property type="evidence" value="ECO:0000315"/>
    <property type="project" value="FlyBase"/>
</dbReference>
<dbReference type="GO" id="GO:0010470">
    <property type="term" value="P:regulation of gastrulation"/>
    <property type="evidence" value="ECO:0000315"/>
    <property type="project" value="FlyBase"/>
</dbReference>
<dbReference type="GO" id="GO:0043519">
    <property type="term" value="P:regulation of myosin II filament organization"/>
    <property type="evidence" value="ECO:0000315"/>
    <property type="project" value="FlyBase"/>
</dbReference>
<dbReference type="CDD" id="cd00068">
    <property type="entry name" value="GGL"/>
    <property type="match status" value="1"/>
</dbReference>
<dbReference type="FunFam" id="4.10.260.10:FF:000001">
    <property type="entry name" value="Guanine nucleotide-binding protein subunit gamma"/>
    <property type="match status" value="1"/>
</dbReference>
<dbReference type="Gene3D" id="4.10.260.10">
    <property type="entry name" value="Transducin (heterotrimeric G protein), gamma chain"/>
    <property type="match status" value="1"/>
</dbReference>
<dbReference type="InterPro" id="IPR015898">
    <property type="entry name" value="G-protein_gamma-like_dom"/>
</dbReference>
<dbReference type="InterPro" id="IPR036284">
    <property type="entry name" value="GGL_sf"/>
</dbReference>
<dbReference type="InterPro" id="IPR001770">
    <property type="entry name" value="Gprotein-gamma"/>
</dbReference>
<dbReference type="PANTHER" id="PTHR13809">
    <property type="entry name" value="GUANINE NUCLEOTIDE-BINDING PROTEIN GAMMA SUBUNIT"/>
    <property type="match status" value="1"/>
</dbReference>
<dbReference type="Pfam" id="PF00631">
    <property type="entry name" value="G-gamma"/>
    <property type="match status" value="1"/>
</dbReference>
<dbReference type="SMART" id="SM01224">
    <property type="entry name" value="G_gamma"/>
    <property type="match status" value="1"/>
</dbReference>
<dbReference type="SMART" id="SM00224">
    <property type="entry name" value="GGL"/>
    <property type="match status" value="1"/>
</dbReference>
<dbReference type="SUPFAM" id="SSF48670">
    <property type="entry name" value="Transducin (heterotrimeric G protein), gamma chain"/>
    <property type="match status" value="1"/>
</dbReference>
<dbReference type="PROSITE" id="PS50058">
    <property type="entry name" value="G_PROTEIN_GAMMA"/>
    <property type="match status" value="1"/>
</dbReference>
<organism>
    <name type="scientific">Drosophila melanogaster</name>
    <name type="common">Fruit fly</name>
    <dbReference type="NCBI Taxonomy" id="7227"/>
    <lineage>
        <taxon>Eukaryota</taxon>
        <taxon>Metazoa</taxon>
        <taxon>Ecdysozoa</taxon>
        <taxon>Arthropoda</taxon>
        <taxon>Hexapoda</taxon>
        <taxon>Insecta</taxon>
        <taxon>Pterygota</taxon>
        <taxon>Neoptera</taxon>
        <taxon>Endopterygota</taxon>
        <taxon>Diptera</taxon>
        <taxon>Brachycera</taxon>
        <taxon>Muscomorpha</taxon>
        <taxon>Ephydroidea</taxon>
        <taxon>Drosophilidae</taxon>
        <taxon>Drosophila</taxon>
        <taxon>Sophophora</taxon>
    </lineage>
</organism>
<evidence type="ECO:0000250" key="1"/>
<evidence type="ECO:0000269" key="2">
    <source>
    </source>
</evidence>
<evidence type="ECO:0000305" key="3"/>
<accession>P38040</accession>
<accession>A4UZ90</accession>
<accession>Q540Y8</accession>
<accession>Q9V4Z3</accession>
<keyword id="KW-1003">Cell membrane</keyword>
<keyword id="KW-0449">Lipoprotein</keyword>
<keyword id="KW-0472">Membrane</keyword>
<keyword id="KW-0488">Methylation</keyword>
<keyword id="KW-0636">Prenylation</keyword>
<keyword id="KW-1185">Reference proteome</keyword>
<keyword id="KW-0807">Transducer</keyword>
<proteinExistence type="evidence at transcript level"/>